<organism>
    <name type="scientific">Synechococcus sp. (strain CC9605)</name>
    <dbReference type="NCBI Taxonomy" id="110662"/>
    <lineage>
        <taxon>Bacteria</taxon>
        <taxon>Bacillati</taxon>
        <taxon>Cyanobacteriota</taxon>
        <taxon>Cyanophyceae</taxon>
        <taxon>Synechococcales</taxon>
        <taxon>Synechococcaceae</taxon>
        <taxon>Synechococcus</taxon>
    </lineage>
</organism>
<keyword id="KW-1283">Bacterial microcompartment</keyword>
<keyword id="KW-0113">Calvin cycle</keyword>
<keyword id="KW-0120">Carbon dioxide fixation</keyword>
<keyword id="KW-1282">Carboxysome</keyword>
<keyword id="KW-0456">Lyase</keyword>
<keyword id="KW-0460">Magnesium</keyword>
<keyword id="KW-0479">Metal-binding</keyword>
<keyword id="KW-0503">Monooxygenase</keyword>
<keyword id="KW-0560">Oxidoreductase</keyword>
<keyword id="KW-0601">Photorespiration</keyword>
<keyword id="KW-0602">Photosynthesis</keyword>
<accession>Q3ALL1</accession>
<comment type="function">
    <text evidence="1">RuBisCO catalyzes two reactions: the carboxylation of D-ribulose 1,5-bisphosphate, the primary event in carbon dioxide fixation, as well as the oxidative fragmentation of the pentose substrate in the photorespiration process. Both reactions occur simultaneously and in competition at the same active site.</text>
</comment>
<comment type="catalytic activity">
    <reaction evidence="1">
        <text>2 (2R)-3-phosphoglycerate + 2 H(+) = D-ribulose 1,5-bisphosphate + CO2 + H2O</text>
        <dbReference type="Rhea" id="RHEA:23124"/>
        <dbReference type="ChEBI" id="CHEBI:15377"/>
        <dbReference type="ChEBI" id="CHEBI:15378"/>
        <dbReference type="ChEBI" id="CHEBI:16526"/>
        <dbReference type="ChEBI" id="CHEBI:57870"/>
        <dbReference type="ChEBI" id="CHEBI:58272"/>
        <dbReference type="EC" id="4.1.1.39"/>
    </reaction>
</comment>
<comment type="catalytic activity">
    <reaction evidence="1">
        <text>D-ribulose 1,5-bisphosphate + O2 = 2-phosphoglycolate + (2R)-3-phosphoglycerate + 2 H(+)</text>
        <dbReference type="Rhea" id="RHEA:36631"/>
        <dbReference type="ChEBI" id="CHEBI:15378"/>
        <dbReference type="ChEBI" id="CHEBI:15379"/>
        <dbReference type="ChEBI" id="CHEBI:57870"/>
        <dbReference type="ChEBI" id="CHEBI:58033"/>
        <dbReference type="ChEBI" id="CHEBI:58272"/>
    </reaction>
</comment>
<comment type="cofactor">
    <cofactor evidence="1">
        <name>Mg(2+)</name>
        <dbReference type="ChEBI" id="CHEBI:18420"/>
    </cofactor>
    <text evidence="1">Binds 1 Mg(2+) ion per subunit.</text>
</comment>
<comment type="subunit">
    <text evidence="1">Heterohexadecamer of 8 large chains and 8 small chains.</text>
</comment>
<comment type="subcellular location">
    <subcellularLocation>
        <location evidence="1">Carboxysome</location>
    </subcellularLocation>
</comment>
<comment type="miscellaneous">
    <text evidence="1">The basic functional RuBisCO is composed of a large chain homodimer in a 'head-to-tail' conformation. In form I RuBisCO this homodimer is arranged in a barrel-like tetramer with the small subunits forming a tetrameric 'cap' on each end of the 'barrel'.</text>
</comment>
<comment type="similarity">
    <text evidence="1">Belongs to the RuBisCO large chain family. Type I subfamily.</text>
</comment>
<reference key="1">
    <citation type="submission" date="2005-07" db="EMBL/GenBank/DDBJ databases">
        <title>Complete sequence of Synechococcus sp. CC9605.</title>
        <authorList>
            <consortium name="US DOE Joint Genome Institute"/>
            <person name="Copeland A."/>
            <person name="Lucas S."/>
            <person name="Lapidus A."/>
            <person name="Barry K."/>
            <person name="Detter J.C."/>
            <person name="Glavina T."/>
            <person name="Hammon N."/>
            <person name="Israni S."/>
            <person name="Pitluck S."/>
            <person name="Schmutz J."/>
            <person name="Martinez M."/>
            <person name="Larimer F."/>
            <person name="Land M."/>
            <person name="Kyrpides N."/>
            <person name="Ivanova N."/>
            <person name="Richardson P."/>
        </authorList>
    </citation>
    <scope>NUCLEOTIDE SEQUENCE [LARGE SCALE GENOMIC DNA]</scope>
    <source>
        <strain>CC9605</strain>
    </source>
</reference>
<feature type="chain" id="PRO_0000251465" description="Ribulose bisphosphate carboxylase large chain">
    <location>
        <begin position="1"/>
        <end position="471"/>
    </location>
</feature>
<feature type="active site" description="Proton acceptor" evidence="1">
    <location>
        <position position="167"/>
    </location>
</feature>
<feature type="active site" description="Proton acceptor" evidence="1">
    <location>
        <position position="286"/>
    </location>
</feature>
<feature type="binding site" description="in homodimeric partner" evidence="1">
    <location>
        <position position="115"/>
    </location>
    <ligand>
        <name>substrate</name>
    </ligand>
</feature>
<feature type="binding site" evidence="1">
    <location>
        <position position="165"/>
    </location>
    <ligand>
        <name>substrate</name>
    </ligand>
</feature>
<feature type="binding site" evidence="1">
    <location>
        <position position="169"/>
    </location>
    <ligand>
        <name>substrate</name>
    </ligand>
</feature>
<feature type="binding site" description="via carbamate group" evidence="1">
    <location>
        <position position="193"/>
    </location>
    <ligand>
        <name>Mg(2+)</name>
        <dbReference type="ChEBI" id="CHEBI:18420"/>
    </ligand>
</feature>
<feature type="binding site" evidence="1">
    <location>
        <position position="195"/>
    </location>
    <ligand>
        <name>Mg(2+)</name>
        <dbReference type="ChEBI" id="CHEBI:18420"/>
    </ligand>
</feature>
<feature type="binding site" evidence="1">
    <location>
        <position position="196"/>
    </location>
    <ligand>
        <name>Mg(2+)</name>
        <dbReference type="ChEBI" id="CHEBI:18420"/>
    </ligand>
</feature>
<feature type="binding site" evidence="1">
    <location>
        <position position="287"/>
    </location>
    <ligand>
        <name>substrate</name>
    </ligand>
</feature>
<feature type="binding site" evidence="1">
    <location>
        <position position="319"/>
    </location>
    <ligand>
        <name>substrate</name>
    </ligand>
</feature>
<feature type="binding site" evidence="1">
    <location>
        <position position="371"/>
    </location>
    <ligand>
        <name>substrate</name>
    </ligand>
</feature>
<feature type="site" description="Transition state stabilizer" evidence="1">
    <location>
        <position position="326"/>
    </location>
</feature>
<feature type="modified residue" description="N6-carboxylysine" evidence="1">
    <location>
        <position position="193"/>
    </location>
</feature>
<dbReference type="EC" id="4.1.1.39" evidence="1"/>
<dbReference type="EMBL" id="CP000110">
    <property type="protein sequence ID" value="ABB34521.1"/>
    <property type="molecule type" value="Genomic_DNA"/>
</dbReference>
<dbReference type="RefSeq" id="WP_011363747.1">
    <property type="nucleotide sequence ID" value="NC_007516.1"/>
</dbReference>
<dbReference type="SMR" id="Q3ALL1"/>
<dbReference type="STRING" id="110662.Syncc9605_0752"/>
<dbReference type="KEGG" id="syd:Syncc9605_0752"/>
<dbReference type="eggNOG" id="COG1850">
    <property type="taxonomic scope" value="Bacteria"/>
</dbReference>
<dbReference type="HOGENOM" id="CLU_031450_2_0_3"/>
<dbReference type="OrthoDB" id="9770811at2"/>
<dbReference type="GO" id="GO:0031470">
    <property type="term" value="C:carboxysome"/>
    <property type="evidence" value="ECO:0007669"/>
    <property type="project" value="UniProtKB-SubCell"/>
</dbReference>
<dbReference type="GO" id="GO:0000287">
    <property type="term" value="F:magnesium ion binding"/>
    <property type="evidence" value="ECO:0007669"/>
    <property type="project" value="UniProtKB-UniRule"/>
</dbReference>
<dbReference type="GO" id="GO:0004497">
    <property type="term" value="F:monooxygenase activity"/>
    <property type="evidence" value="ECO:0007669"/>
    <property type="project" value="UniProtKB-KW"/>
</dbReference>
<dbReference type="GO" id="GO:0016984">
    <property type="term" value="F:ribulose-bisphosphate carboxylase activity"/>
    <property type="evidence" value="ECO:0007669"/>
    <property type="project" value="UniProtKB-UniRule"/>
</dbReference>
<dbReference type="GO" id="GO:0009853">
    <property type="term" value="P:photorespiration"/>
    <property type="evidence" value="ECO:0007669"/>
    <property type="project" value="UniProtKB-KW"/>
</dbReference>
<dbReference type="GO" id="GO:0019253">
    <property type="term" value="P:reductive pentose-phosphate cycle"/>
    <property type="evidence" value="ECO:0007669"/>
    <property type="project" value="UniProtKB-UniRule"/>
</dbReference>
<dbReference type="Gene3D" id="3.20.20.110">
    <property type="entry name" value="Ribulose bisphosphate carboxylase, large subunit, C-terminal domain"/>
    <property type="match status" value="1"/>
</dbReference>
<dbReference type="Gene3D" id="3.30.70.150">
    <property type="entry name" value="RuBisCO large subunit, N-terminal domain"/>
    <property type="match status" value="1"/>
</dbReference>
<dbReference type="HAMAP" id="MF_01338">
    <property type="entry name" value="RuBisCO_L_type1"/>
    <property type="match status" value="1"/>
</dbReference>
<dbReference type="InterPro" id="IPR033966">
    <property type="entry name" value="RuBisCO"/>
</dbReference>
<dbReference type="InterPro" id="IPR020878">
    <property type="entry name" value="RuBisCo_large_chain_AS"/>
</dbReference>
<dbReference type="InterPro" id="IPR000685">
    <property type="entry name" value="RuBisCO_lsu_C"/>
</dbReference>
<dbReference type="InterPro" id="IPR036376">
    <property type="entry name" value="RuBisCO_lsu_C_sf"/>
</dbReference>
<dbReference type="InterPro" id="IPR017443">
    <property type="entry name" value="RuBisCO_lsu_fd_N"/>
</dbReference>
<dbReference type="InterPro" id="IPR036422">
    <property type="entry name" value="RuBisCO_lsu_N_sf"/>
</dbReference>
<dbReference type="InterPro" id="IPR020888">
    <property type="entry name" value="RuBisCO_lsuI"/>
</dbReference>
<dbReference type="NCBIfam" id="NF003252">
    <property type="entry name" value="PRK04208.1"/>
    <property type="match status" value="1"/>
</dbReference>
<dbReference type="PANTHER" id="PTHR42704">
    <property type="entry name" value="RIBULOSE BISPHOSPHATE CARBOXYLASE"/>
    <property type="match status" value="1"/>
</dbReference>
<dbReference type="PANTHER" id="PTHR42704:SF17">
    <property type="entry name" value="RIBULOSE BISPHOSPHATE CARBOXYLASE LARGE CHAIN"/>
    <property type="match status" value="1"/>
</dbReference>
<dbReference type="Pfam" id="PF00016">
    <property type="entry name" value="RuBisCO_large"/>
    <property type="match status" value="1"/>
</dbReference>
<dbReference type="Pfam" id="PF02788">
    <property type="entry name" value="RuBisCO_large_N"/>
    <property type="match status" value="1"/>
</dbReference>
<dbReference type="SFLD" id="SFLDG01052">
    <property type="entry name" value="RuBisCO"/>
    <property type="match status" value="1"/>
</dbReference>
<dbReference type="SFLD" id="SFLDS00014">
    <property type="entry name" value="RuBisCO"/>
    <property type="match status" value="1"/>
</dbReference>
<dbReference type="SFLD" id="SFLDG00301">
    <property type="entry name" value="RuBisCO-like_proteins"/>
    <property type="match status" value="1"/>
</dbReference>
<dbReference type="SUPFAM" id="SSF51649">
    <property type="entry name" value="RuBisCo, C-terminal domain"/>
    <property type="match status" value="1"/>
</dbReference>
<dbReference type="SUPFAM" id="SSF54966">
    <property type="entry name" value="RuBisCO, large subunit, small (N-terminal) domain"/>
    <property type="match status" value="1"/>
</dbReference>
<dbReference type="PROSITE" id="PS00157">
    <property type="entry name" value="RUBISCO_LARGE"/>
    <property type="match status" value="1"/>
</dbReference>
<sequence>MSKKYDAGVKEYRDTYWTPDYVPLDTDLLACFKCTGQEGVPKEEVAAAVAAESSTGTWSTVWSELLTDLDFYKGRCYRIEDVPGDKESFYAFIAYPLDLFEEGSITNVLTSLVGNVFGFKALRHLRLEDIRFPMAFIKSCYGPPNGIQVERDRMNKYGRPLLGCTIKPKLGLSGKNYGRVVYECLRGGLDFTKDDENINSQPFQRWQNRFEFVAEAIKLSEQETGERKGHYLNVTANTPEEMYERAEFAKELGMPIIMHDFITGGFTANTGLSKWCRKNGMLLHIHRAMHAVIDRHPKHGIHFRVLAKCLRLSGGDQLHTGTVVGKLEGDRQTTLGYIDQLRESFVPEDRSRGNFFDQDWGSMPGVFAVASGGIHVWHMPALVTIFGDDSVLQFGGGTHGHPWGSAAGAAANRVALEACVKARNAGRHLEKESRDILTEAAKHSPELAIALETWKEIKFEFDTVDKLDVQN</sequence>
<name>RBL_SYNSC</name>
<evidence type="ECO:0000255" key="1">
    <source>
        <dbReference type="HAMAP-Rule" id="MF_01338"/>
    </source>
</evidence>
<protein>
    <recommendedName>
        <fullName evidence="1">Ribulose bisphosphate carboxylase large chain</fullName>
        <shortName evidence="1">RuBisCO large subunit</shortName>
        <ecNumber evidence="1">4.1.1.39</ecNumber>
    </recommendedName>
</protein>
<proteinExistence type="inferred from homology"/>
<gene>
    <name evidence="1" type="primary">cbbL</name>
    <name evidence="1" type="synonym">rbcL</name>
    <name type="ordered locus">Syncc9605_0752</name>
</gene>